<keyword id="KW-0997">Cell inner membrane</keyword>
<keyword id="KW-1003">Cell membrane</keyword>
<keyword id="KW-0472">Membrane</keyword>
<keyword id="KW-0653">Protein transport</keyword>
<keyword id="KW-1185">Reference proteome</keyword>
<keyword id="KW-0811">Translocation</keyword>
<keyword id="KW-0812">Transmembrane</keyword>
<keyword id="KW-1133">Transmembrane helix</keyword>
<keyword id="KW-0813">Transport</keyword>
<proteinExistence type="inferred from homology"/>
<protein>
    <recommendedName>
        <fullName evidence="1">Sec-independent protein translocase protein TatB</fullName>
    </recommendedName>
</protein>
<feature type="chain" id="PRO_0000301245" description="Sec-independent protein translocase protein TatB">
    <location>
        <begin position="1"/>
        <end position="149"/>
    </location>
</feature>
<feature type="transmembrane region" description="Helical" evidence="1">
    <location>
        <begin position="1"/>
        <end position="21"/>
    </location>
</feature>
<feature type="region of interest" description="Disordered" evidence="2">
    <location>
        <begin position="92"/>
        <end position="149"/>
    </location>
</feature>
<feature type="compositionally biased region" description="Polar residues" evidence="2">
    <location>
        <begin position="101"/>
        <end position="111"/>
    </location>
</feature>
<reference key="1">
    <citation type="journal article" date="2006" name="J. Bacteriol.">
        <title>The genome sequence of the obligately chemolithoautotrophic, facultatively anaerobic bacterium Thiobacillus denitrificans.</title>
        <authorList>
            <person name="Beller H.R."/>
            <person name="Chain P.S."/>
            <person name="Letain T.E."/>
            <person name="Chakicherla A."/>
            <person name="Larimer F.W."/>
            <person name="Richardson P.M."/>
            <person name="Coleman M.A."/>
            <person name="Wood A.P."/>
            <person name="Kelly D.P."/>
        </authorList>
    </citation>
    <scope>NUCLEOTIDE SEQUENCE [LARGE SCALE GENOMIC DNA]</scope>
    <source>
        <strain>ATCC 25259 / T1</strain>
    </source>
</reference>
<name>TATB_THIDA</name>
<comment type="function">
    <text evidence="1">Part of the twin-arginine translocation (Tat) system that transports large folded proteins containing a characteristic twin-arginine motif in their signal peptide across membranes. Together with TatC, TatB is part of a receptor directly interacting with Tat signal peptides. TatB may form an oligomeric binding site that transiently accommodates folded Tat precursor proteins before their translocation.</text>
</comment>
<comment type="subunit">
    <text evidence="1">The Tat system comprises two distinct complexes: a TatABC complex, containing multiple copies of TatA, TatB and TatC subunits, and a separate TatA complex, containing only TatA subunits. Substrates initially bind to the TatABC complex, which probably triggers association of the separate TatA complex to form the active translocon.</text>
</comment>
<comment type="subcellular location">
    <subcellularLocation>
        <location evidence="1">Cell inner membrane</location>
        <topology evidence="1">Single-pass membrane protein</topology>
    </subcellularLocation>
</comment>
<comment type="similarity">
    <text evidence="1">Belongs to the TatB family.</text>
</comment>
<dbReference type="EMBL" id="CP000116">
    <property type="protein sequence ID" value="AAZ97656.1"/>
    <property type="molecule type" value="Genomic_DNA"/>
</dbReference>
<dbReference type="RefSeq" id="WP_011312215.1">
    <property type="nucleotide sequence ID" value="NC_007404.1"/>
</dbReference>
<dbReference type="SMR" id="Q3SI72"/>
<dbReference type="STRING" id="292415.Tbd_1703"/>
<dbReference type="KEGG" id="tbd:Tbd_1703"/>
<dbReference type="eggNOG" id="COG1826">
    <property type="taxonomic scope" value="Bacteria"/>
</dbReference>
<dbReference type="HOGENOM" id="CLU_086034_1_1_4"/>
<dbReference type="OrthoDB" id="9816005at2"/>
<dbReference type="Proteomes" id="UP000008291">
    <property type="component" value="Chromosome"/>
</dbReference>
<dbReference type="GO" id="GO:0033281">
    <property type="term" value="C:TAT protein transport complex"/>
    <property type="evidence" value="ECO:0007669"/>
    <property type="project" value="UniProtKB-UniRule"/>
</dbReference>
<dbReference type="GO" id="GO:0008320">
    <property type="term" value="F:protein transmembrane transporter activity"/>
    <property type="evidence" value="ECO:0007669"/>
    <property type="project" value="UniProtKB-UniRule"/>
</dbReference>
<dbReference type="GO" id="GO:0043953">
    <property type="term" value="P:protein transport by the Tat complex"/>
    <property type="evidence" value="ECO:0007669"/>
    <property type="project" value="UniProtKB-UniRule"/>
</dbReference>
<dbReference type="Gene3D" id="1.20.5.3310">
    <property type="match status" value="1"/>
</dbReference>
<dbReference type="HAMAP" id="MF_00237">
    <property type="entry name" value="TatB"/>
    <property type="match status" value="1"/>
</dbReference>
<dbReference type="InterPro" id="IPR003369">
    <property type="entry name" value="TatA/B/E"/>
</dbReference>
<dbReference type="InterPro" id="IPR018448">
    <property type="entry name" value="TatB"/>
</dbReference>
<dbReference type="NCBIfam" id="TIGR01410">
    <property type="entry name" value="tatB"/>
    <property type="match status" value="1"/>
</dbReference>
<dbReference type="PANTHER" id="PTHR33162">
    <property type="entry name" value="SEC-INDEPENDENT PROTEIN TRANSLOCASE PROTEIN TATA, CHLOROPLASTIC"/>
    <property type="match status" value="1"/>
</dbReference>
<dbReference type="PANTHER" id="PTHR33162:SF1">
    <property type="entry name" value="SEC-INDEPENDENT PROTEIN TRANSLOCASE PROTEIN TATA, CHLOROPLASTIC"/>
    <property type="match status" value="1"/>
</dbReference>
<dbReference type="Pfam" id="PF02416">
    <property type="entry name" value="TatA_B_E"/>
    <property type="match status" value="1"/>
</dbReference>
<dbReference type="PRINTS" id="PR01506">
    <property type="entry name" value="TATBPROTEIN"/>
</dbReference>
<gene>
    <name evidence="1" type="primary">tatB</name>
    <name type="ordered locus">Tbd_1703</name>
</gene>
<organism>
    <name type="scientific">Thiobacillus denitrificans (strain ATCC 25259 / T1)</name>
    <dbReference type="NCBI Taxonomy" id="292415"/>
    <lineage>
        <taxon>Bacteria</taxon>
        <taxon>Pseudomonadati</taxon>
        <taxon>Pseudomonadota</taxon>
        <taxon>Betaproteobacteria</taxon>
        <taxon>Nitrosomonadales</taxon>
        <taxon>Thiobacillaceae</taxon>
        <taxon>Thiobacillus</taxon>
    </lineage>
</organism>
<evidence type="ECO:0000255" key="1">
    <source>
        <dbReference type="HAMAP-Rule" id="MF_00237"/>
    </source>
</evidence>
<evidence type="ECO:0000256" key="2">
    <source>
        <dbReference type="SAM" id="MobiDB-lite"/>
    </source>
</evidence>
<sequence length="149" mass="16393">MFDIGFTELIVIGIVALVVVGPERLPKVARAAGHLYGRMQRYVSTVRSDISREMQLDEMRRVGQDFKQSVESAASGVEQQASVVDDYLRGEVDMLDKSVRNEPQNAQTPPQTADAEPAQPDVRQQTLPLEEPDQNRAAGEPSSTSTRPA</sequence>
<accession>Q3SI72</accession>